<proteinExistence type="inferred from homology"/>
<accession>P69992</accession>
<accession>P52319</accession>
<accession>Q0WDL9</accession>
<accession>Q667Q3</accession>
<accession>Q9ZFR6</accession>
<dbReference type="EMBL" id="AF095636">
    <property type="protein sequence ID" value="AAC78637.1"/>
    <property type="molecule type" value="Genomic_DNA"/>
</dbReference>
<dbReference type="EMBL" id="AL590842">
    <property type="protein sequence ID" value="CAL21289.1"/>
    <property type="molecule type" value="Genomic_DNA"/>
</dbReference>
<dbReference type="EMBL" id="AE009952">
    <property type="protein sequence ID" value="AAM84817.1"/>
    <property type="molecule type" value="Genomic_DNA"/>
</dbReference>
<dbReference type="EMBL" id="AE017042">
    <property type="protein sequence ID" value="AAS62671.1"/>
    <property type="molecule type" value="Genomic_DNA"/>
</dbReference>
<dbReference type="PIR" id="AF0325">
    <property type="entry name" value="AF0325"/>
</dbReference>
<dbReference type="RefSeq" id="WP_002212232.1">
    <property type="nucleotide sequence ID" value="NZ_WUCM01000006.1"/>
</dbReference>
<dbReference type="RefSeq" id="YP_002347619.1">
    <property type="nucleotide sequence ID" value="NC_003143.1"/>
</dbReference>
<dbReference type="SMR" id="P69992"/>
<dbReference type="IntAct" id="P69992">
    <property type="interactions" value="1"/>
</dbReference>
<dbReference type="STRING" id="214092.YPO2670"/>
<dbReference type="PaxDb" id="214092-YPO2670"/>
<dbReference type="DNASU" id="1146189"/>
<dbReference type="EnsemblBacteria" id="AAS62671">
    <property type="protein sequence ID" value="AAS62671"/>
    <property type="gene ID" value="YP_2471"/>
</dbReference>
<dbReference type="GeneID" id="96662301"/>
<dbReference type="KEGG" id="ype:YPO2670"/>
<dbReference type="KEGG" id="ypk:y1242"/>
<dbReference type="KEGG" id="ypm:YP_2471"/>
<dbReference type="PATRIC" id="fig|1028802.3.peg.1408"/>
<dbReference type="eggNOG" id="COG0378">
    <property type="taxonomic scope" value="Bacteria"/>
</dbReference>
<dbReference type="HOGENOM" id="CLU_072144_1_0_6"/>
<dbReference type="OMA" id="REDPTMN"/>
<dbReference type="OrthoDB" id="9802035at2"/>
<dbReference type="Proteomes" id="UP000000815">
    <property type="component" value="Chromosome"/>
</dbReference>
<dbReference type="Proteomes" id="UP000001019">
    <property type="component" value="Chromosome"/>
</dbReference>
<dbReference type="Proteomes" id="UP000002490">
    <property type="component" value="Chromosome"/>
</dbReference>
<dbReference type="GO" id="GO:0005737">
    <property type="term" value="C:cytoplasm"/>
    <property type="evidence" value="ECO:0007669"/>
    <property type="project" value="UniProtKB-SubCell"/>
</dbReference>
<dbReference type="GO" id="GO:0005525">
    <property type="term" value="F:GTP binding"/>
    <property type="evidence" value="ECO:0007669"/>
    <property type="project" value="UniProtKB-KW"/>
</dbReference>
<dbReference type="GO" id="GO:0003924">
    <property type="term" value="F:GTPase activity"/>
    <property type="evidence" value="ECO:0007669"/>
    <property type="project" value="InterPro"/>
</dbReference>
<dbReference type="GO" id="GO:0016151">
    <property type="term" value="F:nickel cation binding"/>
    <property type="evidence" value="ECO:0007669"/>
    <property type="project" value="UniProtKB-UniRule"/>
</dbReference>
<dbReference type="GO" id="GO:0043419">
    <property type="term" value="P:urea catabolic process"/>
    <property type="evidence" value="ECO:0007669"/>
    <property type="project" value="InterPro"/>
</dbReference>
<dbReference type="Gene3D" id="3.40.50.300">
    <property type="entry name" value="P-loop containing nucleotide triphosphate hydrolases"/>
    <property type="match status" value="1"/>
</dbReference>
<dbReference type="HAMAP" id="MF_01389">
    <property type="entry name" value="UreG"/>
    <property type="match status" value="1"/>
</dbReference>
<dbReference type="InterPro" id="IPR003495">
    <property type="entry name" value="CobW/HypB/UreG_nucleotide-bd"/>
</dbReference>
<dbReference type="InterPro" id="IPR027417">
    <property type="entry name" value="P-loop_NTPase"/>
</dbReference>
<dbReference type="InterPro" id="IPR004400">
    <property type="entry name" value="UreG"/>
</dbReference>
<dbReference type="NCBIfam" id="TIGR00101">
    <property type="entry name" value="ureG"/>
    <property type="match status" value="1"/>
</dbReference>
<dbReference type="PANTHER" id="PTHR31715">
    <property type="entry name" value="UREASE ACCESSORY PROTEIN G"/>
    <property type="match status" value="1"/>
</dbReference>
<dbReference type="PANTHER" id="PTHR31715:SF0">
    <property type="entry name" value="UREASE ACCESSORY PROTEIN G"/>
    <property type="match status" value="1"/>
</dbReference>
<dbReference type="Pfam" id="PF02492">
    <property type="entry name" value="cobW"/>
    <property type="match status" value="1"/>
</dbReference>
<dbReference type="PIRSF" id="PIRSF005624">
    <property type="entry name" value="Ni-bind_GTPase"/>
    <property type="match status" value="1"/>
</dbReference>
<dbReference type="SUPFAM" id="SSF52540">
    <property type="entry name" value="P-loop containing nucleoside triphosphate hydrolases"/>
    <property type="match status" value="1"/>
</dbReference>
<feature type="chain" id="PRO_0000067677" description="Urease accessory protein UreG">
    <location>
        <begin position="1"/>
        <end position="220"/>
    </location>
</feature>
<feature type="binding site" evidence="1">
    <location>
        <begin position="18"/>
        <end position="25"/>
    </location>
    <ligand>
        <name>GTP</name>
        <dbReference type="ChEBI" id="CHEBI:37565"/>
    </ligand>
</feature>
<reference key="1">
    <citation type="journal article" date="2001" name="Infect. Immun.">
        <title>Silencing and reactivation of urease in Yersinia pestis is determined by one G residue at a specific position in the ureD gene.</title>
        <authorList>
            <person name="Sebbane F."/>
            <person name="Devalckenaere A."/>
            <person name="Foulon J."/>
            <person name="Carniel E."/>
            <person name="Simonet M."/>
        </authorList>
    </citation>
    <scope>NUCLEOTIDE SEQUENCE [GENOMIC DNA]</scope>
    <scope>LACK OF ROLE IN VIRULENCE</scope>
    <source>
        <strain>6/69M</strain>
    </source>
</reference>
<reference key="2">
    <citation type="journal article" date="2001" name="Nature">
        <title>Genome sequence of Yersinia pestis, the causative agent of plague.</title>
        <authorList>
            <person name="Parkhill J."/>
            <person name="Wren B.W."/>
            <person name="Thomson N.R."/>
            <person name="Titball R.W."/>
            <person name="Holden M.T.G."/>
            <person name="Prentice M.B."/>
            <person name="Sebaihia M."/>
            <person name="James K.D."/>
            <person name="Churcher C.M."/>
            <person name="Mungall K.L."/>
            <person name="Baker S."/>
            <person name="Basham D."/>
            <person name="Bentley S.D."/>
            <person name="Brooks K."/>
            <person name="Cerdeno-Tarraga A.-M."/>
            <person name="Chillingworth T."/>
            <person name="Cronin A."/>
            <person name="Davies R.M."/>
            <person name="Davis P."/>
            <person name="Dougan G."/>
            <person name="Feltwell T."/>
            <person name="Hamlin N."/>
            <person name="Holroyd S."/>
            <person name="Jagels K."/>
            <person name="Karlyshev A.V."/>
            <person name="Leather S."/>
            <person name="Moule S."/>
            <person name="Oyston P.C.F."/>
            <person name="Quail M.A."/>
            <person name="Rutherford K.M."/>
            <person name="Simmonds M."/>
            <person name="Skelton J."/>
            <person name="Stevens K."/>
            <person name="Whitehead S."/>
            <person name="Barrell B.G."/>
        </authorList>
    </citation>
    <scope>NUCLEOTIDE SEQUENCE [LARGE SCALE GENOMIC DNA]</scope>
    <source>
        <strain>CO-92 / Biovar Orientalis</strain>
    </source>
</reference>
<reference key="3">
    <citation type="journal article" date="2002" name="J. Bacteriol.">
        <title>Genome sequence of Yersinia pestis KIM.</title>
        <authorList>
            <person name="Deng W."/>
            <person name="Burland V."/>
            <person name="Plunkett G. III"/>
            <person name="Boutin A."/>
            <person name="Mayhew G.F."/>
            <person name="Liss P."/>
            <person name="Perna N.T."/>
            <person name="Rose D.J."/>
            <person name="Mau B."/>
            <person name="Zhou S."/>
            <person name="Schwartz D.C."/>
            <person name="Fetherston J.D."/>
            <person name="Lindler L.E."/>
            <person name="Brubaker R.R."/>
            <person name="Plano G.V."/>
            <person name="Straley S.C."/>
            <person name="McDonough K.A."/>
            <person name="Nilles M.L."/>
            <person name="Matson J.S."/>
            <person name="Blattner F.R."/>
            <person name="Perry R.D."/>
        </authorList>
    </citation>
    <scope>NUCLEOTIDE SEQUENCE [LARGE SCALE GENOMIC DNA]</scope>
    <source>
        <strain>KIM10+ / Biovar Mediaevalis</strain>
    </source>
</reference>
<reference key="4">
    <citation type="journal article" date="2004" name="DNA Res.">
        <title>Complete genome sequence of Yersinia pestis strain 91001, an isolate avirulent to humans.</title>
        <authorList>
            <person name="Song Y."/>
            <person name="Tong Z."/>
            <person name="Wang J."/>
            <person name="Wang L."/>
            <person name="Guo Z."/>
            <person name="Han Y."/>
            <person name="Zhang J."/>
            <person name="Pei D."/>
            <person name="Zhou D."/>
            <person name="Qin H."/>
            <person name="Pang X."/>
            <person name="Han Y."/>
            <person name="Zhai J."/>
            <person name="Li M."/>
            <person name="Cui B."/>
            <person name="Qi Z."/>
            <person name="Jin L."/>
            <person name="Dai R."/>
            <person name="Chen F."/>
            <person name="Li S."/>
            <person name="Ye C."/>
            <person name="Du Z."/>
            <person name="Lin W."/>
            <person name="Wang J."/>
            <person name="Yu J."/>
            <person name="Yang H."/>
            <person name="Wang J."/>
            <person name="Huang P."/>
            <person name="Yang R."/>
        </authorList>
    </citation>
    <scope>NUCLEOTIDE SEQUENCE [LARGE SCALE GENOMIC DNA]</scope>
    <source>
        <strain>91001 / Biovar Mediaevalis</strain>
    </source>
</reference>
<sequence length="220" mass="24007">MTDKSTARKKITRIGIGGPVGSGKTAIIEVITPILIKRGIKPLIITNDIVTTEDAKQVKRTLKGILDEEKILGVETGACPHTAVREDPSMNIAAVEEMEERFPESDLIMIESGGDNLTLTFSPALADFYIYVIDVAEGEKIPRKNGPGLVQADILVINKIDLAPYVGASLDVMESDTKVVRGNRPYILTNCKTGQGIEELVDMIMRDFLFTHVQPEGEQA</sequence>
<comment type="function">
    <text evidence="1">Facilitates the functional incorporation of the urease nickel metallocenter. This process requires GTP hydrolysis, probably effectuated by UreG.</text>
</comment>
<comment type="subunit">
    <text evidence="1">Homodimer. UreD, UreF and UreG form a complex that acts as a GTP-hydrolysis-dependent molecular chaperone, activating the urease apoprotein by helping to assemble the nickel containing metallocenter of UreC. The UreE protein probably delivers the nickel.</text>
</comment>
<comment type="subcellular location">
    <subcellularLocation>
        <location evidence="1">Cytoplasm</location>
    </subcellularLocation>
</comment>
<comment type="similarity">
    <text evidence="1">Belongs to the SIMIBI class G3E GTPase family. UreG subfamily.</text>
</comment>
<comment type="caution">
    <text evidence="2">The last gene of this probable operon, ureD, gives rise to a truncated protein. Absence of ureD prevents expression of active urease. Correction of the mutation does not effect virulence in mice in any detectable fashion, suggesting urease is not important in the virulence of Y.pestis (PubMed:11119503).</text>
</comment>
<gene>
    <name evidence="1" type="primary">ureG</name>
    <name type="ordered locus">YPO2670</name>
    <name type="ordered locus">y1242</name>
    <name type="ordered locus">YP_2471</name>
</gene>
<organism>
    <name type="scientific">Yersinia pestis</name>
    <dbReference type="NCBI Taxonomy" id="632"/>
    <lineage>
        <taxon>Bacteria</taxon>
        <taxon>Pseudomonadati</taxon>
        <taxon>Pseudomonadota</taxon>
        <taxon>Gammaproteobacteria</taxon>
        <taxon>Enterobacterales</taxon>
        <taxon>Yersiniaceae</taxon>
        <taxon>Yersinia</taxon>
    </lineage>
</organism>
<name>UREG_YERPE</name>
<keyword id="KW-0143">Chaperone</keyword>
<keyword id="KW-0963">Cytoplasm</keyword>
<keyword id="KW-0342">GTP-binding</keyword>
<keyword id="KW-0996">Nickel insertion</keyword>
<keyword id="KW-0547">Nucleotide-binding</keyword>
<keyword id="KW-1185">Reference proteome</keyword>
<evidence type="ECO:0000255" key="1">
    <source>
        <dbReference type="HAMAP-Rule" id="MF_01389"/>
    </source>
</evidence>
<evidence type="ECO:0000305" key="2">
    <source>
    </source>
</evidence>
<protein>
    <recommendedName>
        <fullName evidence="1">Urease accessory protein UreG</fullName>
    </recommendedName>
</protein>